<accession>C5E4D9</accession>
<gene>
    <name evidence="7" type="primary">TEF3</name>
    <name evidence="8" type="ordered locus">ZYRO0E05148g</name>
</gene>
<comment type="function">
    <text evidence="2 6">Ribosome-dependent ATPase that functions in cytoplasmic translation elongation (PubMed:39247690). Required for the ATP-dependent release of deacylated tRNA from the ribosomal E-site during protein biosynthesis (By similarity). Stimulates the eEF1A-dependent binding of aminoacyl-tRNA to the ribosomal A-site, which has reduced affinity for tRNA as long as the E-site is occupied (By similarity). Assists translation termination by stimulating the release of nascent protein from the ribosome by release factors (By similarity).</text>
</comment>
<comment type="catalytic activity">
    <reaction evidence="2">
        <text>ATP + H2O = ADP + phosphate + H(+)</text>
        <dbReference type="Rhea" id="RHEA:13065"/>
        <dbReference type="ChEBI" id="CHEBI:15377"/>
        <dbReference type="ChEBI" id="CHEBI:15378"/>
        <dbReference type="ChEBI" id="CHEBI:30616"/>
        <dbReference type="ChEBI" id="CHEBI:43474"/>
        <dbReference type="ChEBI" id="CHEBI:456216"/>
    </reaction>
</comment>
<comment type="pathway">
    <text evidence="1">Protein biosynthesis; polypeptide chain elongation.</text>
</comment>
<comment type="subcellular location">
    <subcellularLocation>
        <location evidence="2">Cytoplasm</location>
        <location evidence="2">Cytosol</location>
    </subcellularLocation>
</comment>
<comment type="similarity">
    <text evidence="7">Belongs to the ABC transporter superfamily. ABCF family. EF3 subfamily.</text>
</comment>
<keyword id="KW-0067">ATP-binding</keyword>
<keyword id="KW-0963">Cytoplasm</keyword>
<keyword id="KW-0251">Elongation factor</keyword>
<keyword id="KW-0378">Hydrolase</keyword>
<keyword id="KW-0547">Nucleotide-binding</keyword>
<keyword id="KW-0648">Protein biosynthesis</keyword>
<keyword id="KW-1185">Reference proteome</keyword>
<keyword id="KW-0677">Repeat</keyword>
<keyword id="KW-0694">RNA-binding</keyword>
<name>EF3_ZYGRC</name>
<organism evidence="9">
    <name type="scientific">Zygosaccharomyces rouxii (strain ATCC 2623 / CBS 732 / NBRC 1130 / NCYC 568 / NRRL Y-229)</name>
    <dbReference type="NCBI Taxonomy" id="559307"/>
    <lineage>
        <taxon>Eukaryota</taxon>
        <taxon>Fungi</taxon>
        <taxon>Dikarya</taxon>
        <taxon>Ascomycota</taxon>
        <taxon>Saccharomycotina</taxon>
        <taxon>Saccharomycetes</taxon>
        <taxon>Saccharomycetales</taxon>
        <taxon>Saccharomycetaceae</taxon>
        <taxon>Zygosaccharomyces</taxon>
    </lineage>
</organism>
<evidence type="ECO:0000250" key="1">
    <source>
        <dbReference type="UniProtKB" id="O93796"/>
    </source>
</evidence>
<evidence type="ECO:0000250" key="2">
    <source>
        <dbReference type="UniProtKB" id="P16521"/>
    </source>
</evidence>
<evidence type="ECO:0000255" key="3"/>
<evidence type="ECO:0000255" key="4">
    <source>
        <dbReference type="PROSITE-ProRule" id="PRU00434"/>
    </source>
</evidence>
<evidence type="ECO:0000256" key="5">
    <source>
        <dbReference type="SAM" id="MobiDB-lite"/>
    </source>
</evidence>
<evidence type="ECO:0000269" key="6">
    <source>
    </source>
</evidence>
<evidence type="ECO:0000305" key="7"/>
<evidence type="ECO:0000312" key="8">
    <source>
        <dbReference type="EMBL" id="CAR30900.1"/>
    </source>
</evidence>
<evidence type="ECO:0000312" key="9">
    <source>
        <dbReference type="Proteomes" id="UP000008536"/>
    </source>
</evidence>
<reference evidence="9" key="1">
    <citation type="journal article" date="2009" name="Genome Res.">
        <title>Comparative genomics of protoploid Saccharomycetaceae.</title>
        <authorList>
            <consortium name="The Genolevures Consortium"/>
            <person name="Souciet J.-L."/>
            <person name="Dujon B."/>
            <person name="Gaillardin C."/>
            <person name="Johnston M."/>
            <person name="Baret P.V."/>
            <person name="Cliften P."/>
            <person name="Sherman D.J."/>
            <person name="Weissenbach J."/>
            <person name="Westhof E."/>
            <person name="Wincker P."/>
            <person name="Jubin C."/>
            <person name="Poulain J."/>
            <person name="Barbe V."/>
            <person name="Segurens B."/>
            <person name="Artiguenave F."/>
            <person name="Anthouard V."/>
            <person name="Vacherie B."/>
            <person name="Val M.-E."/>
            <person name="Fulton R.S."/>
            <person name="Minx P."/>
            <person name="Wilson R."/>
            <person name="Durrens P."/>
            <person name="Jean G."/>
            <person name="Marck C."/>
            <person name="Martin T."/>
            <person name="Nikolski M."/>
            <person name="Rolland T."/>
            <person name="Seret M.-L."/>
            <person name="Casaregola S."/>
            <person name="Despons L."/>
            <person name="Fairhead C."/>
            <person name="Fischer G."/>
            <person name="Lafontaine I."/>
            <person name="Leh V."/>
            <person name="Lemaire M."/>
            <person name="de Montigny J."/>
            <person name="Neuveglise C."/>
            <person name="Thierry A."/>
            <person name="Blanc-Lenfle I."/>
            <person name="Bleykasten C."/>
            <person name="Diffels J."/>
            <person name="Fritsch E."/>
            <person name="Frangeul L."/>
            <person name="Goeffon A."/>
            <person name="Jauniaux N."/>
            <person name="Kachouri-Lafond R."/>
            <person name="Payen C."/>
            <person name="Potier S."/>
            <person name="Pribylova L."/>
            <person name="Ozanne C."/>
            <person name="Richard G.-F."/>
            <person name="Sacerdot C."/>
            <person name="Straub M.-L."/>
            <person name="Talla E."/>
        </authorList>
    </citation>
    <scope>NUCLEOTIDE SEQUENCE [LARGE SCALE GENOMIC DNA]</scope>
    <source>
        <strain evidence="9">ATCC 2623 / CBS 732 / BCRC 21506 / NBRC 1130 / NCYC 568 / NRRL Y-229</strain>
    </source>
</reference>
<reference evidence="7" key="2">
    <citation type="journal article" date="2024" name="Front. Microbiol.">
        <title>The gene YEF3 function encoding translation elongation factor eEF3 is partially conserved across fungi.</title>
        <authorList>
            <person name="Maldonado G."/>
            <person name="Garcia A."/>
            <person name="Herrero S."/>
            <person name="Castano I."/>
            <person name="Altmann M."/>
            <person name="Fischer R."/>
            <person name="Hernandez G."/>
        </authorList>
    </citation>
    <scope>FUNCTION</scope>
</reference>
<sequence>MSDSQQSVEVLNQLLARLSVATPDNRDEVATEVSSFVNGNIIEHDAPEHFFNGLAKAIKDKKSAVNALAAVSHVASTSGLAPSVEPYVVALVPAILEQTGSKDKDVQSAANAALHAVVTAVNPVAVKAVLPHLTKSLSETNKWQEKVAVLSAISALVDQAKSQISLRMTELIPVLSEAMWDTKKEVKNAATATMTKATETVENKDIERFIPKLIECIANPSEVPETVHLLGATTFVAEVTPATLSIMTPLLSRGLAERETPIKRKSAVIIDNMCKLVEDPQIVAPFLNKLLPGLKNNFSVIADPEAREVTLRGLKTLRRVGAVGEGDVLPEISHAGDPATTLGVLDSLLKTENIAKKFRPAVEYISCIGGDLIDERIIDQQTWFTHVLPYMTIFLHQNQAKEILDEFRKRAVDNIPEPPKFDDEEEEGEDLCNCEFSLAYGAKILLNRTQLRLKRGRRYGLCGPNGSGKSTLMRAIANGQVDGFPSQEECRTVYVEHDIDGTHAETSVLDFVFQGDVGTKEAISAKLKEFGFDDEMIVMPIAALSGGWKMKLALARAVLKNADILLLDEPTNHLDTVNVAWLTNYLITCGITSIVVSHDSGFLDNICQYIIHYEGLKLRKYKGNLSALVERVPSAKSYYELGASDLEFRFPEPGYLEGVKTKQKAIVKVSNMTFQYPGTSKPQISDVSFQCSLSSRIAVIGPNGAGKSTLINVLTGELLPTTGEVYTHENIRIAYIKQHAFAHIESHLDKTPSEYIQWRFQTGEDRETMDRANRQINEDDAQAMNKIFKIDGTPRRIAGIHSRRKFKNSYEYECSFLLGENIGMKSERWVPMMSVDNAWLPRGEVIESHGKMVAEVDMKEALASGQFRPLTRKEIEEHCAMLGLDAELVSHSRIRGLSGGQKVKLVLAAGTWQRPHLIVLDEPTNYLDRDSLGALSKALKEFEGGVIIITHSAEFTKDLTEEVWAVRDGLMTPSGHNWVSGQGSGPRLEKKEDEEDKFDAMGNKISSGTKKTKLSSAELRKKKKERMKKKKELGDAYVSDDDADF</sequence>
<protein>
    <recommendedName>
        <fullName evidence="7">Elongation factor 3</fullName>
        <shortName evidence="7">EF-3</shortName>
        <ecNumber evidence="2">3.6.4.-</ecNumber>
    </recommendedName>
    <alternativeName>
        <fullName evidence="7">Eukaryotic elongation factor 3</fullName>
        <shortName evidence="7">eEF3</shortName>
    </alternativeName>
</protein>
<feature type="chain" id="PRO_0000461807" description="Elongation factor 3">
    <location>
        <begin position="1"/>
        <end position="1045"/>
    </location>
</feature>
<feature type="repeat" description="HEAT 1" evidence="3">
    <location>
        <begin position="86"/>
        <end position="123"/>
    </location>
</feature>
<feature type="repeat" description="HEAT 2" evidence="3">
    <location>
        <begin position="125"/>
        <end position="162"/>
    </location>
</feature>
<feature type="repeat" description="HEAT 3" evidence="3">
    <location>
        <begin position="166"/>
        <end position="203"/>
    </location>
</feature>
<feature type="repeat" description="HEAT 4" evidence="3">
    <location>
        <begin position="171"/>
        <end position="209"/>
    </location>
</feature>
<feature type="repeat" description="HEAT 5" evidence="3">
    <location>
        <begin position="205"/>
        <end position="241"/>
    </location>
</feature>
<feature type="repeat" description="HEAT 6" evidence="3">
    <location>
        <begin position="242"/>
        <end position="279"/>
    </location>
</feature>
<feature type="repeat" description="HEAT 7" evidence="3">
    <location>
        <begin position="285"/>
        <end position="323"/>
    </location>
</feature>
<feature type="domain" description="ABC transporter 1" evidence="4">
    <location>
        <begin position="426"/>
        <end position="641"/>
    </location>
</feature>
<feature type="domain" description="ABC transporter 2" evidence="4">
    <location>
        <begin position="667"/>
        <end position="993"/>
    </location>
</feature>
<feature type="region of interest" description="Disordered" evidence="5">
    <location>
        <begin position="975"/>
        <end position="1045"/>
    </location>
</feature>
<feature type="compositionally biased region" description="Basic residues" evidence="5">
    <location>
        <begin position="1020"/>
        <end position="1031"/>
    </location>
</feature>
<feature type="binding site" evidence="2">
    <location>
        <position position="42"/>
    </location>
    <ligand>
        <name>ADP</name>
        <dbReference type="ChEBI" id="CHEBI:456216"/>
    </ligand>
</feature>
<feature type="binding site" evidence="2">
    <location>
        <position position="44"/>
    </location>
    <ligand>
        <name>ADP</name>
        <dbReference type="ChEBI" id="CHEBI:456216"/>
    </ligand>
</feature>
<feature type="binding site" evidence="2">
    <location>
        <position position="83"/>
    </location>
    <ligand>
        <name>ADP</name>
        <dbReference type="ChEBI" id="CHEBI:456216"/>
    </ligand>
</feature>
<feature type="binding site" evidence="2">
    <location>
        <position position="392"/>
    </location>
    <ligand>
        <name>ADP</name>
        <dbReference type="ChEBI" id="CHEBI:456216"/>
    </ligand>
</feature>
<feature type="binding site" evidence="2">
    <location>
        <position position="396"/>
    </location>
    <ligand>
        <name>ADP</name>
        <dbReference type="ChEBI" id="CHEBI:456216"/>
    </ligand>
</feature>
<feature type="binding site" evidence="2">
    <location>
        <position position="703"/>
    </location>
    <ligand>
        <name>ADP</name>
        <dbReference type="ChEBI" id="CHEBI:456216"/>
    </ligand>
</feature>
<feature type="binding site" evidence="2">
    <location>
        <position position="922"/>
    </location>
    <ligand>
        <name>ADP</name>
        <dbReference type="ChEBI" id="CHEBI:456216"/>
    </ligand>
</feature>
<feature type="binding site" evidence="2">
    <location>
        <position position="925"/>
    </location>
    <ligand>
        <name>ADP</name>
        <dbReference type="ChEBI" id="CHEBI:456216"/>
    </ligand>
</feature>
<feature type="binding site" evidence="2">
    <location>
        <position position="951"/>
    </location>
    <ligand>
        <name>ADP</name>
        <dbReference type="ChEBI" id="CHEBI:456216"/>
    </ligand>
</feature>
<proteinExistence type="inferred from homology"/>
<dbReference type="EC" id="3.6.4.-" evidence="2"/>
<dbReference type="EMBL" id="CU928181">
    <property type="protein sequence ID" value="CAR30900.1"/>
    <property type="molecule type" value="Genomic_DNA"/>
</dbReference>
<dbReference type="RefSeq" id="XP_002499155.1">
    <property type="nucleotide sequence ID" value="XM_002499110.1"/>
</dbReference>
<dbReference type="FunCoup" id="C5E4D9">
    <property type="interactions" value="851"/>
</dbReference>
<dbReference type="STRING" id="559307.C5E4D9"/>
<dbReference type="GeneID" id="8204707"/>
<dbReference type="KEGG" id="zro:ZYRO0E05148g"/>
<dbReference type="HOGENOM" id="CLU_002848_0_0_1"/>
<dbReference type="InParanoid" id="C5E4D9"/>
<dbReference type="UniPathway" id="UPA00345"/>
<dbReference type="Proteomes" id="UP000008536">
    <property type="component" value="Chromosome E"/>
</dbReference>
<dbReference type="GO" id="GO:0005829">
    <property type="term" value="C:cytosol"/>
    <property type="evidence" value="ECO:0007669"/>
    <property type="project" value="UniProtKB-SubCell"/>
</dbReference>
<dbReference type="GO" id="GO:0005524">
    <property type="term" value="F:ATP binding"/>
    <property type="evidence" value="ECO:0007669"/>
    <property type="project" value="UniProtKB-KW"/>
</dbReference>
<dbReference type="GO" id="GO:0016887">
    <property type="term" value="F:ATP hydrolysis activity"/>
    <property type="evidence" value="ECO:0007669"/>
    <property type="project" value="InterPro"/>
</dbReference>
<dbReference type="GO" id="GO:0003723">
    <property type="term" value="F:RNA binding"/>
    <property type="evidence" value="ECO:0007669"/>
    <property type="project" value="UniProtKB-KW"/>
</dbReference>
<dbReference type="GO" id="GO:0003746">
    <property type="term" value="F:translation elongation factor activity"/>
    <property type="evidence" value="ECO:0000316"/>
    <property type="project" value="UniProtKB"/>
</dbReference>
<dbReference type="GO" id="GO:0002182">
    <property type="term" value="P:cytoplasmic translational elongation"/>
    <property type="evidence" value="ECO:0000316"/>
    <property type="project" value="UniProtKB"/>
</dbReference>
<dbReference type="CDD" id="cd03221">
    <property type="entry name" value="ABCF_EF-3"/>
    <property type="match status" value="1"/>
</dbReference>
<dbReference type="CDD" id="cd18626">
    <property type="entry name" value="CD_eEF3"/>
    <property type="match status" value="1"/>
</dbReference>
<dbReference type="FunFam" id="1.20.1390.20:FF:000001">
    <property type="entry name" value="Elongation factor 3"/>
    <property type="match status" value="1"/>
</dbReference>
<dbReference type="FunFam" id="1.25.10.10:FF:000076">
    <property type="entry name" value="Elongation factor 3"/>
    <property type="match status" value="1"/>
</dbReference>
<dbReference type="FunFam" id="2.40.50.990:FF:000001">
    <property type="entry name" value="Elongation factor 3"/>
    <property type="match status" value="1"/>
</dbReference>
<dbReference type="FunFam" id="3.40.50.300:FF:000193">
    <property type="entry name" value="Probable Elongation factor 3"/>
    <property type="match status" value="1"/>
</dbReference>
<dbReference type="Gene3D" id="1.20.1390.20">
    <property type="match status" value="1"/>
</dbReference>
<dbReference type="Gene3D" id="2.40.50.990">
    <property type="match status" value="1"/>
</dbReference>
<dbReference type="Gene3D" id="1.25.10.10">
    <property type="entry name" value="Leucine-rich Repeat Variant"/>
    <property type="match status" value="1"/>
</dbReference>
<dbReference type="Gene3D" id="3.40.50.300">
    <property type="entry name" value="P-loop containing nucleotide triphosphate hydrolases"/>
    <property type="match status" value="2"/>
</dbReference>
<dbReference type="InterPro" id="IPR003593">
    <property type="entry name" value="AAA+_ATPase"/>
</dbReference>
<dbReference type="InterPro" id="IPR003439">
    <property type="entry name" value="ABC_transporter-like_ATP-bd"/>
</dbReference>
<dbReference type="InterPro" id="IPR017871">
    <property type="entry name" value="ABC_transporter-like_CS"/>
</dbReference>
<dbReference type="InterPro" id="IPR050611">
    <property type="entry name" value="ABCF_EF3_subfamily"/>
</dbReference>
<dbReference type="InterPro" id="IPR011989">
    <property type="entry name" value="ARM-like"/>
</dbReference>
<dbReference type="InterPro" id="IPR016024">
    <property type="entry name" value="ARM-type_fold"/>
</dbReference>
<dbReference type="InterPro" id="IPR015688">
    <property type="entry name" value="eEF3_ABC2_chromodomain-like"/>
</dbReference>
<dbReference type="InterPro" id="IPR047038">
    <property type="entry name" value="eEF3_chromodomain-like_sf"/>
</dbReference>
<dbReference type="InterPro" id="IPR040533">
    <property type="entry name" value="EF3_4HB"/>
</dbReference>
<dbReference type="InterPro" id="IPR047036">
    <property type="entry name" value="EF3_4HB_sf"/>
</dbReference>
<dbReference type="InterPro" id="IPR021133">
    <property type="entry name" value="HEAT_type_2"/>
</dbReference>
<dbReference type="InterPro" id="IPR027417">
    <property type="entry name" value="P-loop_NTPase"/>
</dbReference>
<dbReference type="InterPro" id="IPR034085">
    <property type="entry name" value="TOG"/>
</dbReference>
<dbReference type="PANTHER" id="PTHR19211">
    <property type="entry name" value="ATP-BINDING TRANSPORT PROTEIN-RELATED"/>
    <property type="match status" value="1"/>
</dbReference>
<dbReference type="PANTHER" id="PTHR19211:SF5">
    <property type="entry name" value="ELONGATION FACTOR 3A-RELATED"/>
    <property type="match status" value="1"/>
</dbReference>
<dbReference type="Pfam" id="PF17947">
    <property type="entry name" value="4HB"/>
    <property type="match status" value="1"/>
</dbReference>
<dbReference type="Pfam" id="PF00005">
    <property type="entry name" value="ABC_tran"/>
    <property type="match status" value="3"/>
</dbReference>
<dbReference type="Pfam" id="PF24984">
    <property type="entry name" value="HEAT_EF3_GNC1"/>
    <property type="match status" value="1"/>
</dbReference>
<dbReference type="Pfam" id="PF24987">
    <property type="entry name" value="HEAT_EF3_N"/>
    <property type="match status" value="1"/>
</dbReference>
<dbReference type="SMART" id="SM00382">
    <property type="entry name" value="AAA"/>
    <property type="match status" value="2"/>
</dbReference>
<dbReference type="SMART" id="SM01349">
    <property type="entry name" value="TOG"/>
    <property type="match status" value="1"/>
</dbReference>
<dbReference type="SUPFAM" id="SSF48371">
    <property type="entry name" value="ARM repeat"/>
    <property type="match status" value="1"/>
</dbReference>
<dbReference type="SUPFAM" id="SSF52540">
    <property type="entry name" value="P-loop containing nucleoside triphosphate hydrolases"/>
    <property type="match status" value="2"/>
</dbReference>
<dbReference type="PROSITE" id="PS00211">
    <property type="entry name" value="ABC_TRANSPORTER_1"/>
    <property type="match status" value="2"/>
</dbReference>
<dbReference type="PROSITE" id="PS50893">
    <property type="entry name" value="ABC_TRANSPORTER_2"/>
    <property type="match status" value="2"/>
</dbReference>
<dbReference type="PROSITE" id="PS50077">
    <property type="entry name" value="HEAT_REPEAT"/>
    <property type="match status" value="1"/>
</dbReference>